<keyword id="KW-1003">Cell membrane</keyword>
<keyword id="KW-0472">Membrane</keyword>
<keyword id="KW-1185">Reference proteome</keyword>
<keyword id="KW-0812">Transmembrane</keyword>
<keyword id="KW-1133">Transmembrane helix</keyword>
<accession>O66504</accession>
<protein>
    <recommendedName>
        <fullName>Uncharacterized protein aq_097</fullName>
    </recommendedName>
</protein>
<feature type="chain" id="PRO_0000186838" description="Uncharacterized protein aq_097">
    <location>
        <begin position="1"/>
        <end position="407"/>
    </location>
</feature>
<feature type="transmembrane region" description="Helical" evidence="1">
    <location>
        <begin position="13"/>
        <end position="30"/>
    </location>
</feature>
<feature type="transmembrane region" description="Helical" evidence="1">
    <location>
        <begin position="40"/>
        <end position="62"/>
    </location>
</feature>
<feature type="transmembrane region" description="Helical" evidence="1">
    <location>
        <begin position="67"/>
        <end position="89"/>
    </location>
</feature>
<feature type="transmembrane region" description="Helical" evidence="1">
    <location>
        <begin position="118"/>
        <end position="140"/>
    </location>
</feature>
<feature type="transmembrane region" description="Helical" evidence="1">
    <location>
        <begin position="147"/>
        <end position="169"/>
    </location>
</feature>
<feature type="transmembrane region" description="Helical" evidence="1">
    <location>
        <begin position="179"/>
        <end position="199"/>
    </location>
</feature>
<feature type="transmembrane region" description="Helical" evidence="1">
    <location>
        <begin position="253"/>
        <end position="271"/>
    </location>
</feature>
<feature type="transmembrane region" description="Helical" evidence="1">
    <location>
        <begin position="281"/>
        <end position="303"/>
    </location>
</feature>
<feature type="transmembrane region" description="Helical" evidence="1">
    <location>
        <begin position="334"/>
        <end position="356"/>
    </location>
</feature>
<feature type="transmembrane region" description="Helical" evidence="1">
    <location>
        <begin position="361"/>
        <end position="378"/>
    </location>
</feature>
<feature type="transmembrane region" description="Helical" evidence="1">
    <location>
        <begin position="385"/>
        <end position="402"/>
    </location>
</feature>
<name>Y097_AQUAE</name>
<reference key="1">
    <citation type="journal article" date="1998" name="Nature">
        <title>The complete genome of the hyperthermophilic bacterium Aquifex aeolicus.</title>
        <authorList>
            <person name="Deckert G."/>
            <person name="Warren P.V."/>
            <person name="Gaasterland T."/>
            <person name="Young W.G."/>
            <person name="Lenox A.L."/>
            <person name="Graham D.E."/>
            <person name="Overbeek R."/>
            <person name="Snead M.A."/>
            <person name="Keller M."/>
            <person name="Aujay M."/>
            <person name="Huber R."/>
            <person name="Feldman R.A."/>
            <person name="Short J.M."/>
            <person name="Olsen G.J."/>
            <person name="Swanson R.V."/>
        </authorList>
    </citation>
    <scope>NUCLEOTIDE SEQUENCE [LARGE SCALE GENOMIC DNA]</scope>
    <source>
        <strain>VF5</strain>
    </source>
</reference>
<proteinExistence type="predicted"/>
<dbReference type="EMBL" id="AE000657">
    <property type="protein sequence ID" value="AAC06469.1"/>
    <property type="molecule type" value="Genomic_DNA"/>
</dbReference>
<dbReference type="PIR" id="E70309">
    <property type="entry name" value="E70309"/>
</dbReference>
<dbReference type="RefSeq" id="NP_213063.1">
    <property type="nucleotide sequence ID" value="NC_000918.1"/>
</dbReference>
<dbReference type="RefSeq" id="WP_010880001.1">
    <property type="nucleotide sequence ID" value="NC_000918.1"/>
</dbReference>
<dbReference type="SMR" id="O66504"/>
<dbReference type="STRING" id="224324.aq_097"/>
<dbReference type="EnsemblBacteria" id="AAC06469">
    <property type="protein sequence ID" value="AAC06469"/>
    <property type="gene ID" value="aq_097"/>
</dbReference>
<dbReference type="KEGG" id="aae:aq_097"/>
<dbReference type="PATRIC" id="fig|224324.8.peg.83"/>
<dbReference type="eggNOG" id="ENOG502Z7XH">
    <property type="taxonomic scope" value="Bacteria"/>
</dbReference>
<dbReference type="HOGENOM" id="CLU_055998_0_0_0"/>
<dbReference type="InParanoid" id="O66504"/>
<dbReference type="OrthoDB" id="271600at2"/>
<dbReference type="Proteomes" id="UP000000798">
    <property type="component" value="Chromosome"/>
</dbReference>
<dbReference type="GO" id="GO:0005886">
    <property type="term" value="C:plasma membrane"/>
    <property type="evidence" value="ECO:0007669"/>
    <property type="project" value="UniProtKB-SubCell"/>
</dbReference>
<dbReference type="Gene3D" id="1.20.1740.10">
    <property type="entry name" value="Amino acid/polyamine transporter I"/>
    <property type="match status" value="1"/>
</dbReference>
<comment type="subcellular location">
    <subcellularLocation>
        <location evidence="2">Cell membrane</location>
        <topology evidence="2">Multi-pass membrane protein</topology>
    </subcellularLocation>
</comment>
<organism>
    <name type="scientific">Aquifex aeolicus (strain VF5)</name>
    <dbReference type="NCBI Taxonomy" id="224324"/>
    <lineage>
        <taxon>Bacteria</taxon>
        <taxon>Pseudomonadati</taxon>
        <taxon>Aquificota</taxon>
        <taxon>Aquificia</taxon>
        <taxon>Aquificales</taxon>
        <taxon>Aquificaceae</taxon>
        <taxon>Aquifex</taxon>
    </lineage>
</organism>
<evidence type="ECO:0000255" key="1"/>
<evidence type="ECO:0000305" key="2"/>
<sequence length="407" mass="46105">MEILNRLTLTDYIVFTSFILYLLFFLSPFLERKRLWTVAVTPLASIIGSGYLVSAPLLYYVLGKYAILGMAGIVILAYLIGGAIRYNIIKAEPILYGSESSKLKALLLDVERFSNLSLAFAYMISIAFYLRLLSSFVFSGFFERNEVYERLLTTGLLLFIGISGFIRRLHFLEFMEKYAVGLKLSIIFSFLTALLYYNYKNFSFAGEVKPFDLHSLEVLGGILLIVQGFETSKYLGEEYTPEERVKSMKLAQWISGFIYVSFMFLITSVFVHNPPKKLDETEIIFLASAVSLVLGYLLRFGPLMSQFSAAVADTIGAGGLIYEETNHRVSSRFGYLITTLVGVALVWSANVFEIIAYASKAFAFYYLLQTIIAWLVSFEKKDRLQFLVFTLLIPVLIFIVLFGKSVE</sequence>
<gene>
    <name type="ordered locus">aq_097</name>
</gene>